<dbReference type="EMBL" id="BX548175">
    <property type="protein sequence ID" value="CAE21936.1"/>
    <property type="molecule type" value="Genomic_DNA"/>
</dbReference>
<dbReference type="RefSeq" id="WP_011131128.1">
    <property type="nucleotide sequence ID" value="NC_005071.1"/>
</dbReference>
<dbReference type="SMR" id="Q7V518"/>
<dbReference type="KEGG" id="pmt:PMT_1761"/>
<dbReference type="eggNOG" id="COG0216">
    <property type="taxonomic scope" value="Bacteria"/>
</dbReference>
<dbReference type="HOGENOM" id="CLU_036856_0_1_3"/>
<dbReference type="OrthoDB" id="9806673at2"/>
<dbReference type="Proteomes" id="UP000001423">
    <property type="component" value="Chromosome"/>
</dbReference>
<dbReference type="GO" id="GO:0005737">
    <property type="term" value="C:cytoplasm"/>
    <property type="evidence" value="ECO:0007669"/>
    <property type="project" value="UniProtKB-SubCell"/>
</dbReference>
<dbReference type="GO" id="GO:0016149">
    <property type="term" value="F:translation release factor activity, codon specific"/>
    <property type="evidence" value="ECO:0007669"/>
    <property type="project" value="UniProtKB-UniRule"/>
</dbReference>
<dbReference type="FunFam" id="3.30.160.20:FF:000004">
    <property type="entry name" value="Peptide chain release factor 1"/>
    <property type="match status" value="1"/>
</dbReference>
<dbReference type="FunFam" id="3.30.70.1660:FF:000002">
    <property type="entry name" value="Peptide chain release factor 1"/>
    <property type="match status" value="1"/>
</dbReference>
<dbReference type="Gene3D" id="3.30.160.20">
    <property type="match status" value="1"/>
</dbReference>
<dbReference type="Gene3D" id="3.30.70.1660">
    <property type="match status" value="1"/>
</dbReference>
<dbReference type="Gene3D" id="6.10.140.1950">
    <property type="match status" value="1"/>
</dbReference>
<dbReference type="HAMAP" id="MF_00093">
    <property type="entry name" value="Rel_fac_1"/>
    <property type="match status" value="1"/>
</dbReference>
<dbReference type="InterPro" id="IPR005139">
    <property type="entry name" value="PCRF"/>
</dbReference>
<dbReference type="InterPro" id="IPR000352">
    <property type="entry name" value="Pep_chain_release_fac_I"/>
</dbReference>
<dbReference type="InterPro" id="IPR045853">
    <property type="entry name" value="Pep_chain_release_fac_I_sf"/>
</dbReference>
<dbReference type="InterPro" id="IPR050057">
    <property type="entry name" value="Prokaryotic/Mito_RF"/>
</dbReference>
<dbReference type="InterPro" id="IPR004373">
    <property type="entry name" value="RF-1"/>
</dbReference>
<dbReference type="NCBIfam" id="TIGR00019">
    <property type="entry name" value="prfA"/>
    <property type="match status" value="1"/>
</dbReference>
<dbReference type="NCBIfam" id="NF001859">
    <property type="entry name" value="PRK00591.1"/>
    <property type="match status" value="1"/>
</dbReference>
<dbReference type="PANTHER" id="PTHR43804">
    <property type="entry name" value="LD18447P"/>
    <property type="match status" value="1"/>
</dbReference>
<dbReference type="PANTHER" id="PTHR43804:SF8">
    <property type="entry name" value="PEPTIDE CHAIN RELEASE FACTOR APG3, CHLOROPLASTIC"/>
    <property type="match status" value="1"/>
</dbReference>
<dbReference type="Pfam" id="PF03462">
    <property type="entry name" value="PCRF"/>
    <property type="match status" value="1"/>
</dbReference>
<dbReference type="Pfam" id="PF00472">
    <property type="entry name" value="RF-1"/>
    <property type="match status" value="1"/>
</dbReference>
<dbReference type="SMART" id="SM00937">
    <property type="entry name" value="PCRF"/>
    <property type="match status" value="1"/>
</dbReference>
<dbReference type="SUPFAM" id="SSF75620">
    <property type="entry name" value="Release factor"/>
    <property type="match status" value="1"/>
</dbReference>
<dbReference type="PROSITE" id="PS00745">
    <property type="entry name" value="RF_PROK_I"/>
    <property type="match status" value="1"/>
</dbReference>
<comment type="function">
    <text evidence="1">Peptide chain release factor 1 directs the termination of translation in response to the peptide chain termination codons UAG and UAA.</text>
</comment>
<comment type="subcellular location">
    <subcellularLocation>
        <location evidence="1">Cytoplasm</location>
    </subcellularLocation>
</comment>
<comment type="PTM">
    <text evidence="1">Methylated by PrmC. Methylation increases the termination efficiency of RF1.</text>
</comment>
<comment type="similarity">
    <text evidence="1">Belongs to the prokaryotic/mitochondrial release factor family.</text>
</comment>
<proteinExistence type="inferred from homology"/>
<feature type="chain" id="PRO_0000263316" description="Peptide chain release factor 1">
    <location>
        <begin position="1"/>
        <end position="365"/>
    </location>
</feature>
<feature type="modified residue" description="N5-methylglutamine" evidence="1">
    <location>
        <position position="239"/>
    </location>
</feature>
<accession>Q7V518</accession>
<organism>
    <name type="scientific">Prochlorococcus marinus (strain MIT 9313)</name>
    <dbReference type="NCBI Taxonomy" id="74547"/>
    <lineage>
        <taxon>Bacteria</taxon>
        <taxon>Bacillati</taxon>
        <taxon>Cyanobacteriota</taxon>
        <taxon>Cyanophyceae</taxon>
        <taxon>Synechococcales</taxon>
        <taxon>Prochlorococcaceae</taxon>
        <taxon>Prochlorococcus</taxon>
    </lineage>
</organism>
<gene>
    <name evidence="1" type="primary">prfA</name>
    <name type="ordered locus">PMT_1761</name>
</gene>
<keyword id="KW-0963">Cytoplasm</keyword>
<keyword id="KW-0488">Methylation</keyword>
<keyword id="KW-0648">Protein biosynthesis</keyword>
<keyword id="KW-1185">Reference proteome</keyword>
<reference key="1">
    <citation type="journal article" date="2003" name="Nature">
        <title>Genome divergence in two Prochlorococcus ecotypes reflects oceanic niche differentiation.</title>
        <authorList>
            <person name="Rocap G."/>
            <person name="Larimer F.W."/>
            <person name="Lamerdin J.E."/>
            <person name="Malfatti S."/>
            <person name="Chain P."/>
            <person name="Ahlgren N.A."/>
            <person name="Arellano A."/>
            <person name="Coleman M."/>
            <person name="Hauser L."/>
            <person name="Hess W.R."/>
            <person name="Johnson Z.I."/>
            <person name="Land M.L."/>
            <person name="Lindell D."/>
            <person name="Post A.F."/>
            <person name="Regala W."/>
            <person name="Shah M."/>
            <person name="Shaw S.L."/>
            <person name="Steglich C."/>
            <person name="Sullivan M.B."/>
            <person name="Ting C.S."/>
            <person name="Tolonen A."/>
            <person name="Webb E.A."/>
            <person name="Zinser E.R."/>
            <person name="Chisholm S.W."/>
        </authorList>
    </citation>
    <scope>NUCLEOTIDE SEQUENCE [LARGE SCALE GENOMIC DNA]</scope>
    <source>
        <strain>MIT 9313</strain>
    </source>
</reference>
<protein>
    <recommendedName>
        <fullName evidence="1">Peptide chain release factor 1</fullName>
        <shortName evidence="1">RF-1</shortName>
    </recommendedName>
</protein>
<sequence>MDSSTLITRLETAKTSFQSLERQLADPDVAADPKLLESIARERARLEPLVLDFEALQHVEQEWQETKQLLRESRGDDAMESLAQEELQQLEARKTVLVRRLTLALLPSDPRDQRSVMLEIRAGAGGNEACLWAGDLARMYERYGQRIGWSVQPLSATEADLGGFRELILSIKGDAVFSQLKFEAGVHRVQRVPATESQGRVHTSTATVAVMPEADAVEVQIDPSELEISTARSGGAGGQNVNKVETAVDLLHKPTGIRVFCTQQRSQLQNRERAMEILRAKLLERQIAEANARESSTRRAQVGTGDRSEKIRTYNYKDNRTTDHRLGRNFSLEPVLTGQLEELIGACIAEEQRHQLEELSHQEED</sequence>
<name>RF1_PROMM</name>
<evidence type="ECO:0000255" key="1">
    <source>
        <dbReference type="HAMAP-Rule" id="MF_00093"/>
    </source>
</evidence>